<sequence length="507" mass="57965">MINVAILSAIRRWHFRDGASIREIARRSGLSRNTVRKYLQSKVVEPQYPARDSVGKLSPFEPKLRQWLSTEHKKTKKLRRNLRSMYRDLVALGFTGSYDRVCAFARQWKDSEQFKAQTSGKGCFIPLRFACGEAFQFDWSEDFARIAGKQVKLQIAQFKLAHSRAFVLRAYYQQKHEMLFDAHWHAFQIFGGIPKRGIYDNMKTAVDSVGRGKERRVNQRFTAMVSHYLFDAQFCNPASGWEKGQIEKNVQDSRQRLWQGAPDFQSLADLNVWLEHRCKALWSELRHPELDQTVQEAFADEQGELMALPNAFDAFVEQTKRVTSTCLVHHEGNRYSVPASYANRAISLRIYADKLVMAAEGQHIAEHPRLFGSGHARRGHTQYDWHHYLSVLQKKPGALRNGAPFAELPPAFKKLQSILLQRPGGDRDMVEILALVLHHDEGAVLSAVELALECGKPSKEHVLNLLGRLTEEPPPKPIPIPKGLRLTLEPQANVNRYDSLRRAHDAA</sequence>
<proteinExistence type="inferred from homology"/>
<name>TRA6_SHIFL</name>
<gene>
    <name type="primary">istA</name>
</gene>
<geneLocation type="plasmid">
    <name>IncFII R100</name>
    <name>NR1</name>
</geneLocation>
<evidence type="ECO:0000255" key="1">
    <source>
        <dbReference type="PROSITE-ProRule" id="PRU00457"/>
    </source>
</evidence>
<evidence type="ECO:0000255" key="2">
    <source>
        <dbReference type="PROSITE-ProRule" id="PRU00615"/>
    </source>
</evidence>
<evidence type="ECO:0000305" key="3"/>
<feature type="chain" id="PRO_0000075469" description="Transposase for insertion sequences IS1326/IS1353">
    <location>
        <begin position="1"/>
        <end position="507"/>
    </location>
</feature>
<feature type="domain" description="HTH IS21-type" evidence="2">
    <location>
        <begin position="6"/>
        <end position="68"/>
    </location>
</feature>
<feature type="domain" description="Integrase catalytic" evidence="1">
    <location>
        <begin position="122"/>
        <end position="302"/>
    </location>
</feature>
<dbReference type="EMBL" id="U42226">
    <property type="protein sequence ID" value="AAC53729.1"/>
    <property type="molecule type" value="Genomic_DNA"/>
</dbReference>
<dbReference type="EMBL" id="U38187">
    <property type="protein sequence ID" value="AAA79725.1"/>
    <property type="molecule type" value="Genomic_DNA"/>
</dbReference>
<dbReference type="RefSeq" id="WP_001324342.1">
    <property type="nucleotide sequence ID" value="NZ_UDTD01000066.1"/>
</dbReference>
<dbReference type="SMR" id="P0A135"/>
<dbReference type="GO" id="GO:0003677">
    <property type="term" value="F:DNA binding"/>
    <property type="evidence" value="ECO:0007669"/>
    <property type="project" value="UniProtKB-KW"/>
</dbReference>
<dbReference type="GO" id="GO:0015074">
    <property type="term" value="P:DNA integration"/>
    <property type="evidence" value="ECO:0007669"/>
    <property type="project" value="InterPro"/>
</dbReference>
<dbReference type="GO" id="GO:0006310">
    <property type="term" value="P:DNA recombination"/>
    <property type="evidence" value="ECO:0007669"/>
    <property type="project" value="UniProtKB-KW"/>
</dbReference>
<dbReference type="GO" id="GO:0032196">
    <property type="term" value="P:transposition"/>
    <property type="evidence" value="ECO:0007669"/>
    <property type="project" value="UniProtKB-KW"/>
</dbReference>
<dbReference type="Gene3D" id="1.10.10.60">
    <property type="entry name" value="Homeodomain-like"/>
    <property type="match status" value="1"/>
</dbReference>
<dbReference type="Gene3D" id="3.30.420.10">
    <property type="entry name" value="Ribonuclease H-like superfamily/Ribonuclease H"/>
    <property type="match status" value="1"/>
</dbReference>
<dbReference type="InterPro" id="IPR017894">
    <property type="entry name" value="HTH_IS21_transposase_type"/>
</dbReference>
<dbReference type="InterPro" id="IPR001584">
    <property type="entry name" value="Integrase_cat-core"/>
</dbReference>
<dbReference type="InterPro" id="IPR054353">
    <property type="entry name" value="IstA-like_C"/>
</dbReference>
<dbReference type="InterPro" id="IPR036397">
    <property type="entry name" value="RNaseH_sf"/>
</dbReference>
<dbReference type="NCBIfam" id="NF033546">
    <property type="entry name" value="transpos_IS21"/>
    <property type="match status" value="1"/>
</dbReference>
<dbReference type="PANTHER" id="PTHR35004:SF7">
    <property type="entry name" value="INTEGRASE PROTEIN"/>
    <property type="match status" value="1"/>
</dbReference>
<dbReference type="PANTHER" id="PTHR35004">
    <property type="entry name" value="TRANSPOSASE RV3428C-RELATED"/>
    <property type="match status" value="1"/>
</dbReference>
<dbReference type="Pfam" id="PF22483">
    <property type="entry name" value="Mu-transpos_C_2"/>
    <property type="match status" value="1"/>
</dbReference>
<dbReference type="PROSITE" id="PS50531">
    <property type="entry name" value="HTH_IS21"/>
    <property type="match status" value="1"/>
</dbReference>
<dbReference type="PROSITE" id="PS50994">
    <property type="entry name" value="INTEGRASE"/>
    <property type="match status" value="1"/>
</dbReference>
<protein>
    <recommendedName>
        <fullName>Transposase for insertion sequences IS1326/IS1353</fullName>
    </recommendedName>
</protein>
<keyword id="KW-0233">DNA recombination</keyword>
<keyword id="KW-0238">DNA-binding</keyword>
<keyword id="KW-0614">Plasmid</keyword>
<keyword id="KW-0814">Transposable element</keyword>
<keyword id="KW-0815">Transposition</keyword>
<reference key="1">
    <citation type="journal article" date="1996" name="J. Bacteriol.">
        <title>The integrons In0, In2, and In5 are defective transposon derivatives.</title>
        <authorList>
            <person name="Brown H.J."/>
            <person name="Stokes H.W."/>
            <person name="Hall R.M."/>
        </authorList>
    </citation>
    <scope>NUCLEOTIDE SEQUENCE [GENOMIC DNA]</scope>
    <source>
        <transposon>In2</transposon>
    </source>
</reference>
<comment type="function">
    <text evidence="3">Required for the transposition of the insertion element.</text>
</comment>
<comment type="similarity">
    <text evidence="3">Belongs to the transposase IS21/IS408/IS1162 family.</text>
</comment>
<organism>
    <name type="scientific">Shigella flexneri</name>
    <dbReference type="NCBI Taxonomy" id="623"/>
    <lineage>
        <taxon>Bacteria</taxon>
        <taxon>Pseudomonadati</taxon>
        <taxon>Pseudomonadota</taxon>
        <taxon>Gammaproteobacteria</taxon>
        <taxon>Enterobacterales</taxon>
        <taxon>Enterobacteriaceae</taxon>
        <taxon>Shigella</taxon>
    </lineage>
</organism>
<accession>P0A135</accession>
<accession>Q57541</accession>